<accession>B7UKV0</accession>
<dbReference type="EC" id="3.5.99.6" evidence="1"/>
<dbReference type="EMBL" id="FM180568">
    <property type="protein sequence ID" value="CAS08108.1"/>
    <property type="molecule type" value="Genomic_DNA"/>
</dbReference>
<dbReference type="RefSeq" id="WP_001237072.1">
    <property type="nucleotide sequence ID" value="NC_011601.1"/>
</dbReference>
<dbReference type="SMR" id="B7UKV0"/>
<dbReference type="GeneID" id="93776807"/>
<dbReference type="KEGG" id="ecg:E2348C_0560"/>
<dbReference type="HOGENOM" id="CLU_049611_0_1_6"/>
<dbReference type="UniPathway" id="UPA00629">
    <property type="reaction ID" value="UER00684"/>
</dbReference>
<dbReference type="Proteomes" id="UP000008205">
    <property type="component" value="Chromosome"/>
</dbReference>
<dbReference type="GO" id="GO:0005829">
    <property type="term" value="C:cytosol"/>
    <property type="evidence" value="ECO:0007669"/>
    <property type="project" value="TreeGrafter"/>
</dbReference>
<dbReference type="GO" id="GO:0004342">
    <property type="term" value="F:glucosamine-6-phosphate deaminase activity"/>
    <property type="evidence" value="ECO:0007669"/>
    <property type="project" value="UniProtKB-UniRule"/>
</dbReference>
<dbReference type="GO" id="GO:0042802">
    <property type="term" value="F:identical protein binding"/>
    <property type="evidence" value="ECO:0007669"/>
    <property type="project" value="TreeGrafter"/>
</dbReference>
<dbReference type="GO" id="GO:0005975">
    <property type="term" value="P:carbohydrate metabolic process"/>
    <property type="evidence" value="ECO:0007669"/>
    <property type="project" value="InterPro"/>
</dbReference>
<dbReference type="GO" id="GO:0006043">
    <property type="term" value="P:glucosamine catabolic process"/>
    <property type="evidence" value="ECO:0007669"/>
    <property type="project" value="TreeGrafter"/>
</dbReference>
<dbReference type="GO" id="GO:0006046">
    <property type="term" value="P:N-acetylglucosamine catabolic process"/>
    <property type="evidence" value="ECO:0007669"/>
    <property type="project" value="TreeGrafter"/>
</dbReference>
<dbReference type="GO" id="GO:0019262">
    <property type="term" value="P:N-acetylneuraminate catabolic process"/>
    <property type="evidence" value="ECO:0007669"/>
    <property type="project" value="UniProtKB-UniRule"/>
</dbReference>
<dbReference type="CDD" id="cd01399">
    <property type="entry name" value="GlcN6P_deaminase"/>
    <property type="match status" value="1"/>
</dbReference>
<dbReference type="FunFam" id="3.40.50.1360:FF:000002">
    <property type="entry name" value="Glucosamine-6-phosphate deaminase"/>
    <property type="match status" value="1"/>
</dbReference>
<dbReference type="Gene3D" id="3.40.50.1360">
    <property type="match status" value="1"/>
</dbReference>
<dbReference type="HAMAP" id="MF_01241">
    <property type="entry name" value="GlcN6P_deamin"/>
    <property type="match status" value="1"/>
</dbReference>
<dbReference type="InterPro" id="IPR006148">
    <property type="entry name" value="Glc/Gal-6P_isomerase"/>
</dbReference>
<dbReference type="InterPro" id="IPR004547">
    <property type="entry name" value="Glucosamine6P_isomerase"/>
</dbReference>
<dbReference type="InterPro" id="IPR018321">
    <property type="entry name" value="Glucosamine6P_isomerase_CS"/>
</dbReference>
<dbReference type="InterPro" id="IPR037171">
    <property type="entry name" value="NagB/RpiA_transferase-like"/>
</dbReference>
<dbReference type="NCBIfam" id="TIGR00502">
    <property type="entry name" value="nagB"/>
    <property type="match status" value="1"/>
</dbReference>
<dbReference type="NCBIfam" id="NF001685">
    <property type="entry name" value="PRK00443.1-5"/>
    <property type="match status" value="1"/>
</dbReference>
<dbReference type="PANTHER" id="PTHR11280">
    <property type="entry name" value="GLUCOSAMINE-6-PHOSPHATE ISOMERASE"/>
    <property type="match status" value="1"/>
</dbReference>
<dbReference type="PANTHER" id="PTHR11280:SF5">
    <property type="entry name" value="GLUCOSAMINE-6-PHOSPHATE ISOMERASE"/>
    <property type="match status" value="1"/>
</dbReference>
<dbReference type="Pfam" id="PF01182">
    <property type="entry name" value="Glucosamine_iso"/>
    <property type="match status" value="1"/>
</dbReference>
<dbReference type="SUPFAM" id="SSF100950">
    <property type="entry name" value="NagB/RpiA/CoA transferase-like"/>
    <property type="match status" value="1"/>
</dbReference>
<dbReference type="PROSITE" id="PS01161">
    <property type="entry name" value="GLC_GALNAC_ISOMERASE"/>
    <property type="match status" value="1"/>
</dbReference>
<reference key="1">
    <citation type="journal article" date="2009" name="J. Bacteriol.">
        <title>Complete genome sequence and comparative genome analysis of enteropathogenic Escherichia coli O127:H6 strain E2348/69.</title>
        <authorList>
            <person name="Iguchi A."/>
            <person name="Thomson N.R."/>
            <person name="Ogura Y."/>
            <person name="Saunders D."/>
            <person name="Ooka T."/>
            <person name="Henderson I.R."/>
            <person name="Harris D."/>
            <person name="Asadulghani M."/>
            <person name="Kurokawa K."/>
            <person name="Dean P."/>
            <person name="Kenny B."/>
            <person name="Quail M.A."/>
            <person name="Thurston S."/>
            <person name="Dougan G."/>
            <person name="Hayashi T."/>
            <person name="Parkhill J."/>
            <person name="Frankel G."/>
        </authorList>
    </citation>
    <scope>NUCLEOTIDE SEQUENCE [LARGE SCALE GENOMIC DNA]</scope>
    <source>
        <strain>E2348/69 / EPEC</strain>
    </source>
</reference>
<keyword id="KW-0021">Allosteric enzyme</keyword>
<keyword id="KW-0119">Carbohydrate metabolism</keyword>
<keyword id="KW-1015">Disulfide bond</keyword>
<keyword id="KW-0378">Hydrolase</keyword>
<keyword id="KW-1185">Reference proteome</keyword>
<feature type="chain" id="PRO_1000165017" description="Glucosamine-6-phosphate deaminase">
    <location>
        <begin position="1"/>
        <end position="266"/>
    </location>
</feature>
<feature type="active site" description="Proton acceptor; for enolization step" evidence="1">
    <location>
        <position position="72"/>
    </location>
</feature>
<feature type="active site" description="For ring-opening step" evidence="1">
    <location>
        <position position="141"/>
    </location>
</feature>
<feature type="active site" description="Proton acceptor; for ring-opening step" evidence="1">
    <location>
        <position position="143"/>
    </location>
</feature>
<feature type="active site" description="For ring-opening step" evidence="1">
    <location>
        <position position="148"/>
    </location>
</feature>
<feature type="site" description="Part of the allosteric site" evidence="1">
    <location>
        <position position="151"/>
    </location>
</feature>
<feature type="site" description="Part of the allosteric site" evidence="1">
    <location>
        <position position="158"/>
    </location>
</feature>
<feature type="site" description="Part of the allosteric site" evidence="1">
    <location>
        <position position="160"/>
    </location>
</feature>
<feature type="site" description="Part of the allosteric site" evidence="1">
    <location>
        <position position="161"/>
    </location>
</feature>
<feature type="site" description="Part of the allosteric site" evidence="1">
    <location>
        <position position="254"/>
    </location>
</feature>
<feature type="disulfide bond" description="Interchain" evidence="1">
    <location>
        <position position="219"/>
    </location>
</feature>
<name>NAGB_ECO27</name>
<evidence type="ECO:0000255" key="1">
    <source>
        <dbReference type="HAMAP-Rule" id="MF_01241"/>
    </source>
</evidence>
<proteinExistence type="inferred from homology"/>
<gene>
    <name evidence="1" type="primary">nagB</name>
    <name type="ordered locus">E2348C_0560</name>
</gene>
<comment type="function">
    <text evidence="1">Catalyzes the reversible isomerization-deamination of glucosamine 6-phosphate (GlcN6P) to form fructose 6-phosphate (Fru6P) and ammonium ion.</text>
</comment>
<comment type="catalytic activity">
    <reaction evidence="1">
        <text>alpha-D-glucosamine 6-phosphate + H2O = beta-D-fructose 6-phosphate + NH4(+)</text>
        <dbReference type="Rhea" id="RHEA:12172"/>
        <dbReference type="ChEBI" id="CHEBI:15377"/>
        <dbReference type="ChEBI" id="CHEBI:28938"/>
        <dbReference type="ChEBI" id="CHEBI:57634"/>
        <dbReference type="ChEBI" id="CHEBI:75989"/>
        <dbReference type="EC" id="3.5.99.6"/>
    </reaction>
</comment>
<comment type="activity regulation">
    <text evidence="1">Allosterically activated by N-acetylglucosamine 6-phosphate (GlcNAc6P).</text>
</comment>
<comment type="pathway">
    <text evidence="1">Amino-sugar metabolism; N-acetylneuraminate degradation; D-fructose 6-phosphate from N-acetylneuraminate: step 5/5.</text>
</comment>
<comment type="subunit">
    <text evidence="1">Homohexamer; trimer of disulfide-linked dimers.</text>
</comment>
<comment type="similarity">
    <text evidence="1">Belongs to the glucosamine/galactosamine-6-phosphate isomerase family. NagB subfamily.</text>
</comment>
<organism>
    <name type="scientific">Escherichia coli O127:H6 (strain E2348/69 / EPEC)</name>
    <dbReference type="NCBI Taxonomy" id="574521"/>
    <lineage>
        <taxon>Bacteria</taxon>
        <taxon>Pseudomonadati</taxon>
        <taxon>Pseudomonadota</taxon>
        <taxon>Gammaproteobacteria</taxon>
        <taxon>Enterobacterales</taxon>
        <taxon>Enterobacteriaceae</taxon>
        <taxon>Escherichia</taxon>
    </lineage>
</organism>
<protein>
    <recommendedName>
        <fullName evidence="1">Glucosamine-6-phosphate deaminase</fullName>
        <ecNumber evidence="1">3.5.99.6</ecNumber>
    </recommendedName>
    <alternativeName>
        <fullName evidence="1">GlcN6P deaminase</fullName>
        <shortName evidence="1">GNPDA</shortName>
    </alternativeName>
    <alternativeName>
        <fullName evidence="1">Glucosamine-6-phosphate isomerase</fullName>
    </alternativeName>
</protein>
<sequence>MRLIPLTTAEQVGKWAARHIVNRINAFKPTADRPFVLGLPTGGTPMTTYKALVEMHKAGQVSFKHVVTFNMDEYVGLPKEHPESYYSFMHRNFFDHVDIPAENINLLNGNAPDIDAECRQYEEKIRSYGKIHLFMGGVGNDGHIAFNEPASSLASRTRIKTLTHDTRVANSRFFDNDVNQVPKYALTVGVGTLLDAEEVMILVLGSQKALALQAAVEGCVNHMWTISCLQLHPKAIMVCDEPSTMELKVKTLRYFNELEAENIKGL</sequence>